<gene>
    <name evidence="1" type="primary">apt</name>
    <name type="ordered locus">HD_1818</name>
</gene>
<evidence type="ECO:0000255" key="1">
    <source>
        <dbReference type="HAMAP-Rule" id="MF_00004"/>
    </source>
</evidence>
<reference key="1">
    <citation type="submission" date="2003-06" db="EMBL/GenBank/DDBJ databases">
        <title>The complete genome sequence of Haemophilus ducreyi.</title>
        <authorList>
            <person name="Munson R.S. Jr."/>
            <person name="Ray W.C."/>
            <person name="Mahairas G."/>
            <person name="Sabo P."/>
            <person name="Mungur R."/>
            <person name="Johnson L."/>
            <person name="Nguyen D."/>
            <person name="Wang J."/>
            <person name="Forst C."/>
            <person name="Hood L."/>
        </authorList>
    </citation>
    <scope>NUCLEOTIDE SEQUENCE [LARGE SCALE GENOMIC DNA]</scope>
    <source>
        <strain>35000HP / ATCC 700724</strain>
    </source>
</reference>
<protein>
    <recommendedName>
        <fullName evidence="1">Adenine phosphoribosyltransferase</fullName>
        <shortName evidence="1">APRT</shortName>
        <ecNumber evidence="1">2.4.2.7</ecNumber>
    </recommendedName>
</protein>
<name>APT_HAEDU</name>
<feature type="chain" id="PRO_0000149390" description="Adenine phosphoribosyltransferase">
    <location>
        <begin position="1"/>
        <end position="179"/>
    </location>
</feature>
<keyword id="KW-0963">Cytoplasm</keyword>
<keyword id="KW-0328">Glycosyltransferase</keyword>
<keyword id="KW-0660">Purine salvage</keyword>
<keyword id="KW-1185">Reference proteome</keyword>
<keyword id="KW-0808">Transferase</keyword>
<proteinExistence type="inferred from homology"/>
<sequence length="179" mass="19315">MNQLDLIKSSIKSIPNYPKVGIIFRDITSLLENPTAFKASIDAIVAEFKNKGITKVVGTESRGFIFGAPVALALGLPFVLVRKPHKLPRAVISQSYALEYGEDTLEMHLDSINQDDNVLVVDDLLATGGTIDATAKLIRQLGGQVKNAAFVIGLPDLGGKARLEQIGIKSFTLVEFDGH</sequence>
<organism>
    <name type="scientific">Haemophilus ducreyi (strain 35000HP / ATCC 700724)</name>
    <dbReference type="NCBI Taxonomy" id="233412"/>
    <lineage>
        <taxon>Bacteria</taxon>
        <taxon>Pseudomonadati</taxon>
        <taxon>Pseudomonadota</taxon>
        <taxon>Gammaproteobacteria</taxon>
        <taxon>Pasteurellales</taxon>
        <taxon>Pasteurellaceae</taxon>
        <taxon>Haemophilus</taxon>
    </lineage>
</organism>
<accession>Q7VKQ4</accession>
<dbReference type="EC" id="2.4.2.7" evidence="1"/>
<dbReference type="EMBL" id="AE017143">
    <property type="protein sequence ID" value="AAP96568.1"/>
    <property type="molecule type" value="Genomic_DNA"/>
</dbReference>
<dbReference type="RefSeq" id="WP_010945597.1">
    <property type="nucleotide sequence ID" value="NC_002940.2"/>
</dbReference>
<dbReference type="SMR" id="Q7VKQ4"/>
<dbReference type="STRING" id="233412.HD_1818"/>
<dbReference type="KEGG" id="hdu:HD_1818"/>
<dbReference type="eggNOG" id="COG0503">
    <property type="taxonomic scope" value="Bacteria"/>
</dbReference>
<dbReference type="HOGENOM" id="CLU_063339_3_0_6"/>
<dbReference type="OrthoDB" id="9803963at2"/>
<dbReference type="UniPathway" id="UPA00588">
    <property type="reaction ID" value="UER00646"/>
</dbReference>
<dbReference type="Proteomes" id="UP000001022">
    <property type="component" value="Chromosome"/>
</dbReference>
<dbReference type="GO" id="GO:0005829">
    <property type="term" value="C:cytosol"/>
    <property type="evidence" value="ECO:0007669"/>
    <property type="project" value="TreeGrafter"/>
</dbReference>
<dbReference type="GO" id="GO:0003999">
    <property type="term" value="F:adenine phosphoribosyltransferase activity"/>
    <property type="evidence" value="ECO:0007669"/>
    <property type="project" value="UniProtKB-UniRule"/>
</dbReference>
<dbReference type="GO" id="GO:0006168">
    <property type="term" value="P:adenine salvage"/>
    <property type="evidence" value="ECO:0007669"/>
    <property type="project" value="InterPro"/>
</dbReference>
<dbReference type="GO" id="GO:0044209">
    <property type="term" value="P:AMP salvage"/>
    <property type="evidence" value="ECO:0007669"/>
    <property type="project" value="UniProtKB-UniRule"/>
</dbReference>
<dbReference type="GO" id="GO:0006166">
    <property type="term" value="P:purine ribonucleoside salvage"/>
    <property type="evidence" value="ECO:0007669"/>
    <property type="project" value="UniProtKB-KW"/>
</dbReference>
<dbReference type="CDD" id="cd06223">
    <property type="entry name" value="PRTases_typeI"/>
    <property type="match status" value="1"/>
</dbReference>
<dbReference type="FunFam" id="3.40.50.2020:FF:000004">
    <property type="entry name" value="Adenine phosphoribosyltransferase"/>
    <property type="match status" value="1"/>
</dbReference>
<dbReference type="Gene3D" id="3.40.50.2020">
    <property type="match status" value="1"/>
</dbReference>
<dbReference type="HAMAP" id="MF_00004">
    <property type="entry name" value="Aden_phosphoribosyltr"/>
    <property type="match status" value="1"/>
</dbReference>
<dbReference type="InterPro" id="IPR005764">
    <property type="entry name" value="Ade_phspho_trans"/>
</dbReference>
<dbReference type="InterPro" id="IPR050120">
    <property type="entry name" value="Adenine_PRTase"/>
</dbReference>
<dbReference type="InterPro" id="IPR000836">
    <property type="entry name" value="PRibTrfase_dom"/>
</dbReference>
<dbReference type="InterPro" id="IPR029057">
    <property type="entry name" value="PRTase-like"/>
</dbReference>
<dbReference type="NCBIfam" id="TIGR01090">
    <property type="entry name" value="apt"/>
    <property type="match status" value="1"/>
</dbReference>
<dbReference type="NCBIfam" id="NF002632">
    <property type="entry name" value="PRK02304.1-1"/>
    <property type="match status" value="1"/>
</dbReference>
<dbReference type="NCBIfam" id="NF002634">
    <property type="entry name" value="PRK02304.1-3"/>
    <property type="match status" value="1"/>
</dbReference>
<dbReference type="NCBIfam" id="NF002636">
    <property type="entry name" value="PRK02304.1-5"/>
    <property type="match status" value="1"/>
</dbReference>
<dbReference type="PANTHER" id="PTHR11776">
    <property type="entry name" value="ADENINE PHOSPHORIBOSYLTRANSFERASE"/>
    <property type="match status" value="1"/>
</dbReference>
<dbReference type="PANTHER" id="PTHR11776:SF7">
    <property type="entry name" value="PHOSPHORIBOSYLTRANSFERASE DOMAIN-CONTAINING PROTEIN"/>
    <property type="match status" value="1"/>
</dbReference>
<dbReference type="Pfam" id="PF00156">
    <property type="entry name" value="Pribosyltran"/>
    <property type="match status" value="1"/>
</dbReference>
<dbReference type="SUPFAM" id="SSF53271">
    <property type="entry name" value="PRTase-like"/>
    <property type="match status" value="1"/>
</dbReference>
<dbReference type="PROSITE" id="PS00103">
    <property type="entry name" value="PUR_PYR_PR_TRANSFER"/>
    <property type="match status" value="1"/>
</dbReference>
<comment type="function">
    <text evidence="1">Catalyzes a salvage reaction resulting in the formation of AMP, that is energically less costly than de novo synthesis.</text>
</comment>
<comment type="catalytic activity">
    <reaction evidence="1">
        <text>AMP + diphosphate = 5-phospho-alpha-D-ribose 1-diphosphate + adenine</text>
        <dbReference type="Rhea" id="RHEA:16609"/>
        <dbReference type="ChEBI" id="CHEBI:16708"/>
        <dbReference type="ChEBI" id="CHEBI:33019"/>
        <dbReference type="ChEBI" id="CHEBI:58017"/>
        <dbReference type="ChEBI" id="CHEBI:456215"/>
        <dbReference type="EC" id="2.4.2.7"/>
    </reaction>
</comment>
<comment type="pathway">
    <text evidence="1">Purine metabolism; AMP biosynthesis via salvage pathway; AMP from adenine: step 1/1.</text>
</comment>
<comment type="subunit">
    <text evidence="1">Homodimer.</text>
</comment>
<comment type="subcellular location">
    <subcellularLocation>
        <location evidence="1">Cytoplasm</location>
    </subcellularLocation>
</comment>
<comment type="similarity">
    <text evidence="1">Belongs to the purine/pyrimidine phosphoribosyltransferase family.</text>
</comment>